<reference key="1">
    <citation type="journal article" date="2006" name="PLoS Genet.">
        <title>The complete genome sequence and comparative genome analysis of the high pathogenicity Yersinia enterocolitica strain 8081.</title>
        <authorList>
            <person name="Thomson N.R."/>
            <person name="Howard S."/>
            <person name="Wren B.W."/>
            <person name="Holden M.T.G."/>
            <person name="Crossman L."/>
            <person name="Challis G.L."/>
            <person name="Churcher C."/>
            <person name="Mungall K."/>
            <person name="Brooks K."/>
            <person name="Chillingworth T."/>
            <person name="Feltwell T."/>
            <person name="Abdellah Z."/>
            <person name="Hauser H."/>
            <person name="Jagels K."/>
            <person name="Maddison M."/>
            <person name="Moule S."/>
            <person name="Sanders M."/>
            <person name="Whitehead S."/>
            <person name="Quail M.A."/>
            <person name="Dougan G."/>
            <person name="Parkhill J."/>
            <person name="Prentice M.B."/>
        </authorList>
    </citation>
    <scope>NUCLEOTIDE SEQUENCE [LARGE SCALE GENOMIC DNA]</scope>
    <source>
        <strain>NCTC 13174 / 8081</strain>
    </source>
</reference>
<keyword id="KW-0240">DNA-directed RNA polymerase</keyword>
<keyword id="KW-0460">Magnesium</keyword>
<keyword id="KW-0479">Metal-binding</keyword>
<keyword id="KW-0548">Nucleotidyltransferase</keyword>
<keyword id="KW-0804">Transcription</keyword>
<keyword id="KW-0808">Transferase</keyword>
<keyword id="KW-0862">Zinc</keyword>
<proteinExistence type="inferred from homology"/>
<dbReference type="EC" id="2.7.7.6" evidence="1"/>
<dbReference type="EMBL" id="AM286415">
    <property type="protein sequence ID" value="CAL10419.1"/>
    <property type="molecule type" value="Genomic_DNA"/>
</dbReference>
<dbReference type="RefSeq" id="WP_005175699.1">
    <property type="nucleotide sequence ID" value="NC_008800.1"/>
</dbReference>
<dbReference type="RefSeq" id="YP_001004669.1">
    <property type="nucleotide sequence ID" value="NC_008800.1"/>
</dbReference>
<dbReference type="SMR" id="A1JII1"/>
<dbReference type="KEGG" id="yen:YE0287"/>
<dbReference type="PATRIC" id="fig|393305.7.peg.379"/>
<dbReference type="eggNOG" id="COG0086">
    <property type="taxonomic scope" value="Bacteria"/>
</dbReference>
<dbReference type="HOGENOM" id="CLU_000524_3_1_6"/>
<dbReference type="OrthoDB" id="9815296at2"/>
<dbReference type="Proteomes" id="UP000000642">
    <property type="component" value="Chromosome"/>
</dbReference>
<dbReference type="GO" id="GO:0000428">
    <property type="term" value="C:DNA-directed RNA polymerase complex"/>
    <property type="evidence" value="ECO:0007669"/>
    <property type="project" value="UniProtKB-KW"/>
</dbReference>
<dbReference type="GO" id="GO:0003677">
    <property type="term" value="F:DNA binding"/>
    <property type="evidence" value="ECO:0007669"/>
    <property type="project" value="UniProtKB-UniRule"/>
</dbReference>
<dbReference type="GO" id="GO:0003899">
    <property type="term" value="F:DNA-directed RNA polymerase activity"/>
    <property type="evidence" value="ECO:0007669"/>
    <property type="project" value="UniProtKB-UniRule"/>
</dbReference>
<dbReference type="GO" id="GO:0000287">
    <property type="term" value="F:magnesium ion binding"/>
    <property type="evidence" value="ECO:0007669"/>
    <property type="project" value="UniProtKB-UniRule"/>
</dbReference>
<dbReference type="GO" id="GO:0008270">
    <property type="term" value="F:zinc ion binding"/>
    <property type="evidence" value="ECO:0007669"/>
    <property type="project" value="UniProtKB-UniRule"/>
</dbReference>
<dbReference type="GO" id="GO:0006351">
    <property type="term" value="P:DNA-templated transcription"/>
    <property type="evidence" value="ECO:0007669"/>
    <property type="project" value="UniProtKB-UniRule"/>
</dbReference>
<dbReference type="CDD" id="cd02655">
    <property type="entry name" value="RNAP_beta'_C"/>
    <property type="match status" value="1"/>
</dbReference>
<dbReference type="CDD" id="cd01609">
    <property type="entry name" value="RNAP_beta'_N"/>
    <property type="match status" value="1"/>
</dbReference>
<dbReference type="FunFam" id="1.10.132.30:FF:000003">
    <property type="entry name" value="DNA-directed RNA polymerase subunit beta"/>
    <property type="match status" value="1"/>
</dbReference>
<dbReference type="FunFam" id="1.10.150.390:FF:000002">
    <property type="entry name" value="DNA-directed RNA polymerase subunit beta"/>
    <property type="match status" value="1"/>
</dbReference>
<dbReference type="FunFam" id="1.10.274.100:FF:000002">
    <property type="entry name" value="DNA-directed RNA polymerase subunit beta"/>
    <property type="match status" value="1"/>
</dbReference>
<dbReference type="FunFam" id="1.10.40.90:FF:000001">
    <property type="entry name" value="DNA-directed RNA polymerase subunit beta"/>
    <property type="match status" value="1"/>
</dbReference>
<dbReference type="FunFam" id="2.40.50.100:FF:000012">
    <property type="entry name" value="DNA-directed RNA polymerase subunit beta"/>
    <property type="match status" value="1"/>
</dbReference>
<dbReference type="FunFam" id="2.40.50.100:FF:000016">
    <property type="entry name" value="DNA-directed RNA polymerase subunit beta"/>
    <property type="match status" value="1"/>
</dbReference>
<dbReference type="FunFam" id="2.40.50.100:FF:000019">
    <property type="entry name" value="DNA-directed RNA polymerase subunit beta"/>
    <property type="match status" value="1"/>
</dbReference>
<dbReference type="FunFam" id="4.10.860.120:FF:000001">
    <property type="entry name" value="DNA-directed RNA polymerase subunit beta"/>
    <property type="match status" value="1"/>
</dbReference>
<dbReference type="Gene3D" id="1.10.132.30">
    <property type="match status" value="1"/>
</dbReference>
<dbReference type="Gene3D" id="1.10.150.390">
    <property type="match status" value="1"/>
</dbReference>
<dbReference type="Gene3D" id="1.10.1790.20">
    <property type="match status" value="1"/>
</dbReference>
<dbReference type="Gene3D" id="1.10.40.90">
    <property type="match status" value="1"/>
</dbReference>
<dbReference type="Gene3D" id="2.40.40.20">
    <property type="match status" value="1"/>
</dbReference>
<dbReference type="Gene3D" id="2.40.50.100">
    <property type="match status" value="3"/>
</dbReference>
<dbReference type="Gene3D" id="4.10.860.120">
    <property type="entry name" value="RNA polymerase II, clamp domain"/>
    <property type="match status" value="1"/>
</dbReference>
<dbReference type="Gene3D" id="1.10.274.100">
    <property type="entry name" value="RNA polymerase Rpb1, domain 3"/>
    <property type="match status" value="1"/>
</dbReference>
<dbReference type="HAMAP" id="MF_01322">
    <property type="entry name" value="RNApol_bact_RpoC"/>
    <property type="match status" value="1"/>
</dbReference>
<dbReference type="InterPro" id="IPR045867">
    <property type="entry name" value="DNA-dir_RpoC_beta_prime"/>
</dbReference>
<dbReference type="InterPro" id="IPR012754">
    <property type="entry name" value="DNA-dir_RpoC_beta_prime_bact"/>
</dbReference>
<dbReference type="InterPro" id="IPR000722">
    <property type="entry name" value="RNA_pol_asu"/>
</dbReference>
<dbReference type="InterPro" id="IPR006592">
    <property type="entry name" value="RNA_pol_N"/>
</dbReference>
<dbReference type="InterPro" id="IPR007080">
    <property type="entry name" value="RNA_pol_Rpb1_1"/>
</dbReference>
<dbReference type="InterPro" id="IPR007066">
    <property type="entry name" value="RNA_pol_Rpb1_3"/>
</dbReference>
<dbReference type="InterPro" id="IPR042102">
    <property type="entry name" value="RNA_pol_Rpb1_3_sf"/>
</dbReference>
<dbReference type="InterPro" id="IPR007083">
    <property type="entry name" value="RNA_pol_Rpb1_4"/>
</dbReference>
<dbReference type="InterPro" id="IPR007081">
    <property type="entry name" value="RNA_pol_Rpb1_5"/>
</dbReference>
<dbReference type="InterPro" id="IPR044893">
    <property type="entry name" value="RNA_pol_Rpb1_clamp_domain"/>
</dbReference>
<dbReference type="InterPro" id="IPR038120">
    <property type="entry name" value="Rpb1_funnel_sf"/>
</dbReference>
<dbReference type="NCBIfam" id="TIGR02386">
    <property type="entry name" value="rpoC_TIGR"/>
    <property type="match status" value="1"/>
</dbReference>
<dbReference type="PANTHER" id="PTHR19376">
    <property type="entry name" value="DNA-DIRECTED RNA POLYMERASE"/>
    <property type="match status" value="1"/>
</dbReference>
<dbReference type="PANTHER" id="PTHR19376:SF54">
    <property type="entry name" value="DNA-DIRECTED RNA POLYMERASE SUBUNIT BETA"/>
    <property type="match status" value="1"/>
</dbReference>
<dbReference type="Pfam" id="PF04997">
    <property type="entry name" value="RNA_pol_Rpb1_1"/>
    <property type="match status" value="1"/>
</dbReference>
<dbReference type="Pfam" id="PF00623">
    <property type="entry name" value="RNA_pol_Rpb1_2"/>
    <property type="match status" value="2"/>
</dbReference>
<dbReference type="Pfam" id="PF04983">
    <property type="entry name" value="RNA_pol_Rpb1_3"/>
    <property type="match status" value="1"/>
</dbReference>
<dbReference type="Pfam" id="PF05000">
    <property type="entry name" value="RNA_pol_Rpb1_4"/>
    <property type="match status" value="1"/>
</dbReference>
<dbReference type="Pfam" id="PF04998">
    <property type="entry name" value="RNA_pol_Rpb1_5"/>
    <property type="match status" value="1"/>
</dbReference>
<dbReference type="SMART" id="SM00663">
    <property type="entry name" value="RPOLA_N"/>
    <property type="match status" value="1"/>
</dbReference>
<dbReference type="SUPFAM" id="SSF64484">
    <property type="entry name" value="beta and beta-prime subunits of DNA dependent RNA-polymerase"/>
    <property type="match status" value="1"/>
</dbReference>
<comment type="function">
    <text evidence="1">DNA-dependent RNA polymerase catalyzes the transcription of DNA into RNA using the four ribonucleoside triphosphates as substrates.</text>
</comment>
<comment type="catalytic activity">
    <reaction evidence="1">
        <text>RNA(n) + a ribonucleoside 5'-triphosphate = RNA(n+1) + diphosphate</text>
        <dbReference type="Rhea" id="RHEA:21248"/>
        <dbReference type="Rhea" id="RHEA-COMP:14527"/>
        <dbReference type="Rhea" id="RHEA-COMP:17342"/>
        <dbReference type="ChEBI" id="CHEBI:33019"/>
        <dbReference type="ChEBI" id="CHEBI:61557"/>
        <dbReference type="ChEBI" id="CHEBI:140395"/>
        <dbReference type="EC" id="2.7.7.6"/>
    </reaction>
</comment>
<comment type="cofactor">
    <cofactor evidence="1">
        <name>Mg(2+)</name>
        <dbReference type="ChEBI" id="CHEBI:18420"/>
    </cofactor>
    <text evidence="1">Binds 1 Mg(2+) ion per subunit.</text>
</comment>
<comment type="cofactor">
    <cofactor evidence="1">
        <name>Zn(2+)</name>
        <dbReference type="ChEBI" id="CHEBI:29105"/>
    </cofactor>
    <text evidence="1">Binds 2 Zn(2+) ions per subunit.</text>
</comment>
<comment type="subunit">
    <text evidence="1">The RNAP catalytic core consists of 2 alpha, 1 beta, 1 beta' and 1 omega subunit. When a sigma factor is associated with the core the holoenzyme is formed, which can initiate transcription.</text>
</comment>
<comment type="similarity">
    <text evidence="1">Belongs to the RNA polymerase beta' chain family.</text>
</comment>
<accession>A1JII1</accession>
<name>RPOC_YERE8</name>
<organism>
    <name type="scientific">Yersinia enterocolitica serotype O:8 / biotype 1B (strain NCTC 13174 / 8081)</name>
    <dbReference type="NCBI Taxonomy" id="393305"/>
    <lineage>
        <taxon>Bacteria</taxon>
        <taxon>Pseudomonadati</taxon>
        <taxon>Pseudomonadota</taxon>
        <taxon>Gammaproteobacteria</taxon>
        <taxon>Enterobacterales</taxon>
        <taxon>Yersiniaceae</taxon>
        <taxon>Yersinia</taxon>
    </lineage>
</organism>
<gene>
    <name evidence="1" type="primary">rpoC</name>
    <name type="ordered locus">YE0287</name>
</gene>
<protein>
    <recommendedName>
        <fullName evidence="1">DNA-directed RNA polymerase subunit beta'</fullName>
        <shortName evidence="1">RNAP subunit beta'</shortName>
        <ecNumber evidence="1">2.7.7.6</ecNumber>
    </recommendedName>
    <alternativeName>
        <fullName evidence="1">RNA polymerase subunit beta'</fullName>
    </alternativeName>
    <alternativeName>
        <fullName evidence="1">Transcriptase subunit beta'</fullName>
    </alternativeName>
</protein>
<evidence type="ECO:0000255" key="1">
    <source>
        <dbReference type="HAMAP-Rule" id="MF_01322"/>
    </source>
</evidence>
<sequence length="1406" mass="154952">MKDLLKFLKAQTKTEEFDAIKIALASPDMIRSWSFGEVKKPETINYRTFKPERDGLFCARIFGPVKDYECLCGKYKRLKHRGVICEKCGVEVTQTKVRRERMGHIELASPTAHIWFLKSLPSRIGLLLDMPLRDIERVLYFESYVVIEGGMTNLERRQILTEEQYLDALEEFGDEFDAKMGAEAIQALLKNMDLEAECEILREELNETNSETKRKKLTKRIKLLEAFVQSGNKPEWMILTVLPVLPPDLRPLVPLDGGRFATSDLNDLYRRVINRNNRLKRLLDLAAPDIIVRNEKRMLQEAVDALLDNGRRGRAITGSNKRPLKSLADMIKGKQGRFRQNLLGKRVDYSGRSVITVGPYLRLHQCGLPKKMALELFKPFIYGKLELRGLATTIKAAKKMVEREEAVVWDILDEVIREHPVLLNRAPTLHRLGIQAFEPVLIEGKAIQLHPLVCAAYNADFDGDQMAVHVPLTLEAQLEARALMMSTNNILSPANGEPIIVPSQDVVLGLYYMTRDCVNAKGEGMVLTGPKEAERIYRAGLASLHARVKVRITEEIRNTEGESTSRTSIIDTTVGRAILWMIVPKGLPYSIVNQPLGKKAISKMLNTCYRILGLKPTVIFADQIMYTGFAYAARSGASVGIDDMVIPEAKAGIIEEAETEVAEIQEQFQSGLVTAGERYNKVIDIWAAANERVAKAMMDNLSVEDVVNRDGVVEQQVSFNSIFMMADSGARGSAAQIRQLAGMRGLMAKPDGSIIETPITANFREGLNVLQYFISTHGARKGLADTALKTANSGYLTRRLVDVAQDLVVTEDDCGTHNGIVMTPVIEGGDVKEPLRDRVLGRVTAEEVIKPGTADILVPRNTLLDEKWCDLLEENSVDSVKVRSVVSCETDFGVCANCYGRDLARGHIINKGEAVGVIAAQSIGEPGTQLTMRTFHIGGAASRAAAESSIQVKNKGSLKLSNVKFVTNAAGKLVITSRNTELKLIDEFGRTKESYKVPYGAVMAKGDGAEVQGGETVANWDPHIMPVVTEVSGFIRFADMIDGQTITRQTDELTGLSSLVVLDSAERTGSGKDLRPALKIVDAKGDDVLIPGTDMPAQYFLPGKAIVQLEDGIQIGAGDTLARIPQESSGTKDITGGLPRVADLFEARRPKEPAILAEISGIISFGKETKGKRRLVISPLDGSDAYEEMIPKWRQLNVFEGEIVERGDVVSDGPESPHDILRLRGVHAVTRYITNEVQEVYRLQGVKINDKHIEVIVRQMLRKGTIVDAGSTDFLEGEQAEMSRVKIANRKLAAEGKIEATFTRDLLGITKASLATESFISAASFQETTRVLTEAAVAGKRDELRGLKENVIVGRLIPAGTGYAYHQDRMRRKAQGEAPVVPQVSADEATANLAELLNAGFGNSKD</sequence>
<feature type="chain" id="PRO_0000353460" description="DNA-directed RNA polymerase subunit beta'">
    <location>
        <begin position="1"/>
        <end position="1406"/>
    </location>
</feature>
<feature type="binding site" evidence="1">
    <location>
        <position position="70"/>
    </location>
    <ligand>
        <name>Zn(2+)</name>
        <dbReference type="ChEBI" id="CHEBI:29105"/>
        <label>1</label>
    </ligand>
</feature>
<feature type="binding site" evidence="1">
    <location>
        <position position="72"/>
    </location>
    <ligand>
        <name>Zn(2+)</name>
        <dbReference type="ChEBI" id="CHEBI:29105"/>
        <label>1</label>
    </ligand>
</feature>
<feature type="binding site" evidence="1">
    <location>
        <position position="85"/>
    </location>
    <ligand>
        <name>Zn(2+)</name>
        <dbReference type="ChEBI" id="CHEBI:29105"/>
        <label>1</label>
    </ligand>
</feature>
<feature type="binding site" evidence="1">
    <location>
        <position position="88"/>
    </location>
    <ligand>
        <name>Zn(2+)</name>
        <dbReference type="ChEBI" id="CHEBI:29105"/>
        <label>1</label>
    </ligand>
</feature>
<feature type="binding site" evidence="1">
    <location>
        <position position="460"/>
    </location>
    <ligand>
        <name>Mg(2+)</name>
        <dbReference type="ChEBI" id="CHEBI:18420"/>
    </ligand>
</feature>
<feature type="binding site" evidence="1">
    <location>
        <position position="462"/>
    </location>
    <ligand>
        <name>Mg(2+)</name>
        <dbReference type="ChEBI" id="CHEBI:18420"/>
    </ligand>
</feature>
<feature type="binding site" evidence="1">
    <location>
        <position position="464"/>
    </location>
    <ligand>
        <name>Mg(2+)</name>
        <dbReference type="ChEBI" id="CHEBI:18420"/>
    </ligand>
</feature>
<feature type="binding site" evidence="1">
    <location>
        <position position="814"/>
    </location>
    <ligand>
        <name>Zn(2+)</name>
        <dbReference type="ChEBI" id="CHEBI:29105"/>
        <label>2</label>
    </ligand>
</feature>
<feature type="binding site" evidence="1">
    <location>
        <position position="888"/>
    </location>
    <ligand>
        <name>Zn(2+)</name>
        <dbReference type="ChEBI" id="CHEBI:29105"/>
        <label>2</label>
    </ligand>
</feature>
<feature type="binding site" evidence="1">
    <location>
        <position position="895"/>
    </location>
    <ligand>
        <name>Zn(2+)</name>
        <dbReference type="ChEBI" id="CHEBI:29105"/>
        <label>2</label>
    </ligand>
</feature>
<feature type="binding site" evidence="1">
    <location>
        <position position="898"/>
    </location>
    <ligand>
        <name>Zn(2+)</name>
        <dbReference type="ChEBI" id="CHEBI:29105"/>
        <label>2</label>
    </ligand>
</feature>